<protein>
    <recommendedName>
        <fullName>UPF0337 protein BB3586</fullName>
    </recommendedName>
</protein>
<reference key="1">
    <citation type="journal article" date="2003" name="Nat. Genet.">
        <title>Comparative analysis of the genome sequences of Bordetella pertussis, Bordetella parapertussis and Bordetella bronchiseptica.</title>
        <authorList>
            <person name="Parkhill J."/>
            <person name="Sebaihia M."/>
            <person name="Preston A."/>
            <person name="Murphy L.D."/>
            <person name="Thomson N.R."/>
            <person name="Harris D.E."/>
            <person name="Holden M.T.G."/>
            <person name="Churcher C.M."/>
            <person name="Bentley S.D."/>
            <person name="Mungall K.L."/>
            <person name="Cerdeno-Tarraga A.-M."/>
            <person name="Temple L."/>
            <person name="James K.D."/>
            <person name="Harris B."/>
            <person name="Quail M.A."/>
            <person name="Achtman M."/>
            <person name="Atkin R."/>
            <person name="Baker S."/>
            <person name="Basham D."/>
            <person name="Bason N."/>
            <person name="Cherevach I."/>
            <person name="Chillingworth T."/>
            <person name="Collins M."/>
            <person name="Cronin A."/>
            <person name="Davis P."/>
            <person name="Doggett J."/>
            <person name="Feltwell T."/>
            <person name="Goble A."/>
            <person name="Hamlin N."/>
            <person name="Hauser H."/>
            <person name="Holroyd S."/>
            <person name="Jagels K."/>
            <person name="Leather S."/>
            <person name="Moule S."/>
            <person name="Norberczak H."/>
            <person name="O'Neil S."/>
            <person name="Ormond D."/>
            <person name="Price C."/>
            <person name="Rabbinowitsch E."/>
            <person name="Rutter S."/>
            <person name="Sanders M."/>
            <person name="Saunders D."/>
            <person name="Seeger K."/>
            <person name="Sharp S."/>
            <person name="Simmonds M."/>
            <person name="Skelton J."/>
            <person name="Squares R."/>
            <person name="Squares S."/>
            <person name="Stevens K."/>
            <person name="Unwin L."/>
            <person name="Whitehead S."/>
            <person name="Barrell B.G."/>
            <person name="Maskell D.J."/>
        </authorList>
    </citation>
    <scope>NUCLEOTIDE SEQUENCE [LARGE SCALE GENOMIC DNA]</scope>
    <source>
        <strain>ATCC BAA-588 / NCTC 13252 / RB50</strain>
    </source>
</reference>
<accession>Q7WGK3</accession>
<gene>
    <name type="ordered locus">BB3586</name>
</gene>
<dbReference type="EMBL" id="BX640447">
    <property type="protein sequence ID" value="CAE34080.1"/>
    <property type="molecule type" value="Genomic_DNA"/>
</dbReference>
<dbReference type="RefSeq" id="WP_003813568.1">
    <property type="nucleotide sequence ID" value="NC_002927.3"/>
</dbReference>
<dbReference type="SMR" id="Q7WGK3"/>
<dbReference type="KEGG" id="bbr:BB3586"/>
<dbReference type="eggNOG" id="COG3237">
    <property type="taxonomic scope" value="Bacteria"/>
</dbReference>
<dbReference type="HOGENOM" id="CLU_135567_4_3_4"/>
<dbReference type="Proteomes" id="UP000001027">
    <property type="component" value="Chromosome"/>
</dbReference>
<dbReference type="Gene3D" id="1.10.1470.10">
    <property type="entry name" value="YjbJ"/>
    <property type="match status" value="1"/>
</dbReference>
<dbReference type="InterPro" id="IPR008462">
    <property type="entry name" value="CsbD"/>
</dbReference>
<dbReference type="InterPro" id="IPR050423">
    <property type="entry name" value="UPF0337_stress_rsp"/>
</dbReference>
<dbReference type="InterPro" id="IPR026042">
    <property type="entry name" value="YjbJ"/>
</dbReference>
<dbReference type="InterPro" id="IPR036629">
    <property type="entry name" value="YjbJ_sf"/>
</dbReference>
<dbReference type="PANTHER" id="PTHR34977">
    <property type="entry name" value="UPF0337 PROTEIN YJBJ"/>
    <property type="match status" value="1"/>
</dbReference>
<dbReference type="PANTHER" id="PTHR34977:SF1">
    <property type="entry name" value="UPF0337 PROTEIN YJBJ"/>
    <property type="match status" value="1"/>
</dbReference>
<dbReference type="Pfam" id="PF05532">
    <property type="entry name" value="CsbD"/>
    <property type="match status" value="1"/>
</dbReference>
<dbReference type="PIRSF" id="PIRSF039008">
    <property type="entry name" value="YjbJ"/>
    <property type="match status" value="1"/>
</dbReference>
<dbReference type="SUPFAM" id="SSF69047">
    <property type="entry name" value="Hypothetical protein YjbJ"/>
    <property type="match status" value="1"/>
</dbReference>
<sequence>MNNDIVAGKWKQLTGKAKAAWGELTDDELTRTEGNAERLAGLIQERYGKTKEQAQREVREFFDRNP</sequence>
<evidence type="ECO:0000305" key="1"/>
<comment type="similarity">
    <text evidence="1">Belongs to the UPF0337 (CsbD) family.</text>
</comment>
<organism>
    <name type="scientific">Bordetella bronchiseptica (strain ATCC BAA-588 / NCTC 13252 / RB50)</name>
    <name type="common">Alcaligenes bronchisepticus</name>
    <dbReference type="NCBI Taxonomy" id="257310"/>
    <lineage>
        <taxon>Bacteria</taxon>
        <taxon>Pseudomonadati</taxon>
        <taxon>Pseudomonadota</taxon>
        <taxon>Betaproteobacteria</taxon>
        <taxon>Burkholderiales</taxon>
        <taxon>Alcaligenaceae</taxon>
        <taxon>Bordetella</taxon>
    </lineage>
</organism>
<feature type="chain" id="PRO_0000209989" description="UPF0337 protein BB3586">
    <location>
        <begin position="1"/>
        <end position="66"/>
    </location>
</feature>
<proteinExistence type="inferred from homology"/>
<name>Y3586_BORBR</name>